<name>CEP78_XENTR</name>
<reference key="1">
    <citation type="submission" date="2007-01" db="EMBL/GenBank/DDBJ databases">
        <authorList>
            <consortium name="NIH - Xenopus Gene Collection (XGC) project"/>
        </authorList>
    </citation>
    <scope>NUCLEOTIDE SEQUENCE [LARGE SCALE MRNA]</scope>
    <source>
        <tissue>Testis</tissue>
    </source>
</reference>
<proteinExistence type="evidence at transcript level"/>
<protein>
    <recommendedName>
        <fullName>Centrosomal protein of 78 kDa</fullName>
        <shortName>Cep78</shortName>
    </recommendedName>
</protein>
<accession>A2RRS8</accession>
<feature type="chain" id="PRO_0000291954" description="Centrosomal protein of 78 kDa">
    <location>
        <begin position="1"/>
        <end position="727"/>
    </location>
</feature>
<feature type="region of interest" description="Disordered" evidence="2">
    <location>
        <begin position="567"/>
        <end position="613"/>
    </location>
</feature>
<feature type="region of interest" description="Disordered" evidence="2">
    <location>
        <begin position="636"/>
        <end position="727"/>
    </location>
</feature>
<feature type="compositionally biased region" description="Basic and acidic residues" evidence="2">
    <location>
        <begin position="568"/>
        <end position="578"/>
    </location>
</feature>
<feature type="compositionally biased region" description="Polar residues" evidence="2">
    <location>
        <begin position="579"/>
        <end position="592"/>
    </location>
</feature>
<feature type="compositionally biased region" description="Low complexity" evidence="2">
    <location>
        <begin position="647"/>
        <end position="666"/>
    </location>
</feature>
<feature type="compositionally biased region" description="Polar residues" evidence="2">
    <location>
        <begin position="703"/>
        <end position="727"/>
    </location>
</feature>
<comment type="function">
    <text evidence="1">Centriole wall protein that localizes to mature centrioles and regulates centriole and cilia biogenesis. Involved in centrosome duplication: required for efficient PLK4 centrosomal localization and PLK4-induced overduplication of centrioles. Involved in cilium biogenesis and controls cilium length.</text>
</comment>
<comment type="subcellular location">
    <subcellularLocation>
        <location evidence="1">Cytoplasm</location>
        <location evidence="1">Cytoskeleton</location>
        <location evidence="1">Microtubule organizing center</location>
        <location evidence="1">Centrosome</location>
    </subcellularLocation>
    <subcellularLocation>
        <location evidence="1">Cytoplasm</location>
        <location evidence="1">Cytoskeleton</location>
        <location evidence="1">Microtubule organizing center</location>
        <location evidence="1">Centrosome</location>
        <location evidence="1">Centriole</location>
    </subcellularLocation>
    <subcellularLocation>
        <location evidence="1">Cytoplasm</location>
        <location evidence="1">Cytoskeleton</location>
        <location evidence="1">Cilium basal body</location>
    </subcellularLocation>
</comment>
<comment type="similarity">
    <text evidence="3">Belongs to the CEP78 family.</text>
</comment>
<gene>
    <name type="primary">cep78</name>
</gene>
<organism>
    <name type="scientific">Xenopus tropicalis</name>
    <name type="common">Western clawed frog</name>
    <name type="synonym">Silurana tropicalis</name>
    <dbReference type="NCBI Taxonomy" id="8364"/>
    <lineage>
        <taxon>Eukaryota</taxon>
        <taxon>Metazoa</taxon>
        <taxon>Chordata</taxon>
        <taxon>Craniata</taxon>
        <taxon>Vertebrata</taxon>
        <taxon>Euteleostomi</taxon>
        <taxon>Amphibia</taxon>
        <taxon>Batrachia</taxon>
        <taxon>Anura</taxon>
        <taxon>Pipoidea</taxon>
        <taxon>Pipidae</taxon>
        <taxon>Xenopodinae</taxon>
        <taxon>Xenopus</taxon>
        <taxon>Silurana</taxon>
    </lineage>
</organism>
<dbReference type="EMBL" id="BC131834">
    <property type="protein sequence ID" value="AAI31835.1"/>
    <property type="molecule type" value="mRNA"/>
</dbReference>
<dbReference type="RefSeq" id="NP_001090753.1">
    <property type="nucleotide sequence ID" value="NM_001097284.1"/>
</dbReference>
<dbReference type="SMR" id="A2RRS8"/>
<dbReference type="FunCoup" id="A2RRS8">
    <property type="interactions" value="1834"/>
</dbReference>
<dbReference type="STRING" id="8364.ENSXETP00000038674"/>
<dbReference type="PaxDb" id="8364-ENSXETP00000007816"/>
<dbReference type="GeneID" id="100037836"/>
<dbReference type="KEGG" id="xtr:100037836"/>
<dbReference type="AGR" id="Xenbase:XB-GENE-5884411"/>
<dbReference type="CTD" id="84131"/>
<dbReference type="Xenbase" id="XB-GENE-5884411">
    <property type="gene designation" value="cep78"/>
</dbReference>
<dbReference type="eggNOG" id="KOG4308">
    <property type="taxonomic scope" value="Eukaryota"/>
</dbReference>
<dbReference type="InParanoid" id="A2RRS8"/>
<dbReference type="OrthoDB" id="78308at2759"/>
<dbReference type="Reactome" id="R-XTR-2565942">
    <property type="pathway name" value="Regulation of PLK1 Activity at G2/M Transition"/>
</dbReference>
<dbReference type="Reactome" id="R-XTR-380259">
    <property type="pathway name" value="Loss of Nlp from mitotic centrosomes"/>
</dbReference>
<dbReference type="Reactome" id="R-XTR-380270">
    <property type="pathway name" value="Recruitment of mitotic centrosome proteins and complexes"/>
</dbReference>
<dbReference type="Reactome" id="R-XTR-380320">
    <property type="pathway name" value="Recruitment of NuMA to mitotic centrosomes"/>
</dbReference>
<dbReference type="Reactome" id="R-XTR-5620912">
    <property type="pathway name" value="Anchoring of the basal body to the plasma membrane"/>
</dbReference>
<dbReference type="Reactome" id="R-XTR-8854518">
    <property type="pathway name" value="AURKA Activation by TPX2"/>
</dbReference>
<dbReference type="Proteomes" id="UP000008143">
    <property type="component" value="Chromosome 1"/>
</dbReference>
<dbReference type="GO" id="GO:0005814">
    <property type="term" value="C:centriole"/>
    <property type="evidence" value="ECO:0000250"/>
    <property type="project" value="UniProtKB"/>
</dbReference>
<dbReference type="GO" id="GO:0005813">
    <property type="term" value="C:centrosome"/>
    <property type="evidence" value="ECO:0007669"/>
    <property type="project" value="UniProtKB-SubCell"/>
</dbReference>
<dbReference type="GO" id="GO:0036064">
    <property type="term" value="C:ciliary basal body"/>
    <property type="evidence" value="ECO:0000250"/>
    <property type="project" value="UniProtKB"/>
</dbReference>
<dbReference type="GO" id="GO:0005737">
    <property type="term" value="C:cytoplasm"/>
    <property type="evidence" value="ECO:0007669"/>
    <property type="project" value="UniProtKB-KW"/>
</dbReference>
<dbReference type="GO" id="GO:0044782">
    <property type="term" value="P:cilium organization"/>
    <property type="evidence" value="ECO:0000250"/>
    <property type="project" value="UniProtKB"/>
</dbReference>
<dbReference type="GO" id="GO:0031397">
    <property type="term" value="P:negative regulation of protein ubiquitination"/>
    <property type="evidence" value="ECO:0000250"/>
    <property type="project" value="UniProtKB"/>
</dbReference>
<dbReference type="GO" id="GO:0071539">
    <property type="term" value="P:protein localization to centrosome"/>
    <property type="evidence" value="ECO:0000250"/>
    <property type="project" value="UniProtKB"/>
</dbReference>
<dbReference type="FunFam" id="3.80.10.10:FF:000057">
    <property type="entry name" value="Centrosomal protein of 78 kDa"/>
    <property type="match status" value="1"/>
</dbReference>
<dbReference type="FunFam" id="3.80.10.10:FF:000070">
    <property type="entry name" value="Centrosomal protein of 78 kDa"/>
    <property type="match status" value="1"/>
</dbReference>
<dbReference type="Gene3D" id="3.80.10.10">
    <property type="entry name" value="Ribonuclease Inhibitor"/>
    <property type="match status" value="2"/>
</dbReference>
<dbReference type="InterPro" id="IPR026212">
    <property type="entry name" value="Cep78"/>
</dbReference>
<dbReference type="InterPro" id="IPR001611">
    <property type="entry name" value="Leu-rich_rpt"/>
</dbReference>
<dbReference type="InterPro" id="IPR032675">
    <property type="entry name" value="LRR_dom_sf"/>
</dbReference>
<dbReference type="PANTHER" id="PTHR24110">
    <property type="entry name" value="CENTROSOMAL PROTEIN OF 78 KDA"/>
    <property type="match status" value="1"/>
</dbReference>
<dbReference type="PANTHER" id="PTHR24110:SF3">
    <property type="entry name" value="CENTROSOMAL PROTEIN OF 78 KDA"/>
    <property type="match status" value="1"/>
</dbReference>
<dbReference type="Pfam" id="PF13516">
    <property type="entry name" value="LRR_6"/>
    <property type="match status" value="1"/>
</dbReference>
<dbReference type="PRINTS" id="PR02062">
    <property type="entry name" value="CENTROSOME78"/>
</dbReference>
<dbReference type="SMART" id="SM00368">
    <property type="entry name" value="LRR_RI"/>
    <property type="match status" value="5"/>
</dbReference>
<dbReference type="SUPFAM" id="SSF52047">
    <property type="entry name" value="RNI-like"/>
    <property type="match status" value="1"/>
</dbReference>
<keyword id="KW-0966">Cell projection</keyword>
<keyword id="KW-0969">Cilium</keyword>
<keyword id="KW-0970">Cilium biogenesis/degradation</keyword>
<keyword id="KW-0963">Cytoplasm</keyword>
<keyword id="KW-0206">Cytoskeleton</keyword>
<keyword id="KW-1185">Reference proteome</keyword>
<evidence type="ECO:0000250" key="1">
    <source>
        <dbReference type="UniProtKB" id="Q5JTW2"/>
    </source>
</evidence>
<evidence type="ECO:0000256" key="2">
    <source>
        <dbReference type="SAM" id="MobiDB-lite"/>
    </source>
</evidence>
<evidence type="ECO:0000305" key="3"/>
<sequence>MIDSVRIRHQGSMDFLSHYEYLCALQDSVPIPAVKANIRHGSLSFNADRIKLSDWLPILNSLKINKSLLNVSIKSCHQPGLGEFGAEKYGIYFKRRIPPIRSKDMTFQVCKAITSCLSVSGSLKELELHGLPLRERDLRILAKGLAASSSVESLSLAYCSCGDEGLEIICQSVKNSPTIKTVNFTGCNLTWRGAEHIASIIKHQATRRHSEAWAESLRYRRPDLDCMAGLRRVTLNSNTLVGDRGAIALAEVIGEDLWLKALDLRQCGISNEGAQAFLNAFQTNTTLIILDIRRNPLIDRSLLKTIIERVLMNAHDTNSEYKWYTSPSSKDNGKVRQKWRSINNWNGRKGKNIVRVGFSTKKPMVIGRKYSSKELYCPDPRPPGAEGFLPWRTAERAKRHRDVSGEWASPGKADTAVKVIMDSETSSESEKSDNILSILDQEYAVPGSGEKKSVKNYKCLQLEFENTRLRQINHTLSESLHSRTATSVILEDEGVLDSIEKSFSKFHAFLDLLKDAGLGQLANLAGIDQSDFALPGDPQMSSTIDKIAQQAPMPHQDQQETFFIHQAQSRDKKGEHTGPSESNALTADTLPSSREADKYCTTSQKSKEGFDPDLKAREANVNSGRLPALENAQTYLYDKKGSRNECSASDSSRSQRSSLGQKSKASASEKERKPSSKRSHSSGTNKASQESIAARDEKAAARSNASISESEIQEKMNSSESMHSGSH</sequence>